<protein>
    <recommendedName>
        <fullName evidence="1">Small ribosomal subunit protein bS20</fullName>
    </recommendedName>
    <alternativeName>
        <fullName evidence="2">30S ribosomal protein S20</fullName>
    </alternativeName>
</protein>
<evidence type="ECO:0000255" key="1">
    <source>
        <dbReference type="HAMAP-Rule" id="MF_00500"/>
    </source>
</evidence>
<evidence type="ECO:0000305" key="2"/>
<comment type="function">
    <text evidence="1">Binds directly to 16S ribosomal RNA.</text>
</comment>
<comment type="similarity">
    <text evidence="1">Belongs to the bacterial ribosomal protein bS20 family.</text>
</comment>
<feature type="chain" id="PRO_1000126423" description="Small ribosomal subunit protein bS20">
    <location>
        <begin position="1"/>
        <end position="87"/>
    </location>
</feature>
<reference key="1">
    <citation type="submission" date="2008-04" db="EMBL/GenBank/DDBJ databases">
        <title>Complete sequence of Clostridium botulinum strain Eklund.</title>
        <authorList>
            <person name="Brinkac L.M."/>
            <person name="Brown J.L."/>
            <person name="Bruce D."/>
            <person name="Detter C."/>
            <person name="Munk C."/>
            <person name="Smith L.A."/>
            <person name="Smith T.J."/>
            <person name="Sutton G."/>
            <person name="Brettin T.S."/>
        </authorList>
    </citation>
    <scope>NUCLEOTIDE SEQUENCE [LARGE SCALE GENOMIC DNA]</scope>
    <source>
        <strain>Eklund 17B / Type B</strain>
    </source>
</reference>
<accession>B2TLY9</accession>
<proteinExistence type="inferred from homology"/>
<keyword id="KW-0687">Ribonucleoprotein</keyword>
<keyword id="KW-0689">Ribosomal protein</keyword>
<keyword id="KW-0694">RNA-binding</keyword>
<keyword id="KW-0699">rRNA-binding</keyword>
<organism>
    <name type="scientific">Clostridium botulinum (strain Eklund 17B / Type B)</name>
    <dbReference type="NCBI Taxonomy" id="935198"/>
    <lineage>
        <taxon>Bacteria</taxon>
        <taxon>Bacillati</taxon>
        <taxon>Bacillota</taxon>
        <taxon>Clostridia</taxon>
        <taxon>Eubacteriales</taxon>
        <taxon>Clostridiaceae</taxon>
        <taxon>Clostridium</taxon>
    </lineage>
</organism>
<dbReference type="EMBL" id="CP001056">
    <property type="protein sequence ID" value="ACD23860.1"/>
    <property type="molecule type" value="Genomic_DNA"/>
</dbReference>
<dbReference type="SMR" id="B2TLY9"/>
<dbReference type="KEGG" id="cbk:CLL_A0883"/>
<dbReference type="PATRIC" id="fig|935198.13.peg.833"/>
<dbReference type="HOGENOM" id="CLU_160655_1_0_9"/>
<dbReference type="Proteomes" id="UP000001195">
    <property type="component" value="Chromosome"/>
</dbReference>
<dbReference type="GO" id="GO:0005829">
    <property type="term" value="C:cytosol"/>
    <property type="evidence" value="ECO:0007669"/>
    <property type="project" value="TreeGrafter"/>
</dbReference>
<dbReference type="GO" id="GO:0015935">
    <property type="term" value="C:small ribosomal subunit"/>
    <property type="evidence" value="ECO:0007669"/>
    <property type="project" value="TreeGrafter"/>
</dbReference>
<dbReference type="GO" id="GO:0070181">
    <property type="term" value="F:small ribosomal subunit rRNA binding"/>
    <property type="evidence" value="ECO:0007669"/>
    <property type="project" value="TreeGrafter"/>
</dbReference>
<dbReference type="GO" id="GO:0003735">
    <property type="term" value="F:structural constituent of ribosome"/>
    <property type="evidence" value="ECO:0007669"/>
    <property type="project" value="InterPro"/>
</dbReference>
<dbReference type="GO" id="GO:0006412">
    <property type="term" value="P:translation"/>
    <property type="evidence" value="ECO:0007669"/>
    <property type="project" value="UniProtKB-UniRule"/>
</dbReference>
<dbReference type="FunFam" id="1.20.58.110:FF:000001">
    <property type="entry name" value="30S ribosomal protein S20"/>
    <property type="match status" value="1"/>
</dbReference>
<dbReference type="Gene3D" id="1.20.58.110">
    <property type="entry name" value="Ribosomal protein S20"/>
    <property type="match status" value="1"/>
</dbReference>
<dbReference type="HAMAP" id="MF_00500">
    <property type="entry name" value="Ribosomal_bS20"/>
    <property type="match status" value="1"/>
</dbReference>
<dbReference type="InterPro" id="IPR002583">
    <property type="entry name" value="Ribosomal_bS20"/>
</dbReference>
<dbReference type="InterPro" id="IPR036510">
    <property type="entry name" value="Ribosomal_bS20_sf"/>
</dbReference>
<dbReference type="NCBIfam" id="TIGR00029">
    <property type="entry name" value="S20"/>
    <property type="match status" value="1"/>
</dbReference>
<dbReference type="PANTHER" id="PTHR33398">
    <property type="entry name" value="30S RIBOSOMAL PROTEIN S20"/>
    <property type="match status" value="1"/>
</dbReference>
<dbReference type="PANTHER" id="PTHR33398:SF1">
    <property type="entry name" value="SMALL RIBOSOMAL SUBUNIT PROTEIN BS20C"/>
    <property type="match status" value="1"/>
</dbReference>
<dbReference type="Pfam" id="PF01649">
    <property type="entry name" value="Ribosomal_S20p"/>
    <property type="match status" value="1"/>
</dbReference>
<dbReference type="SUPFAM" id="SSF46992">
    <property type="entry name" value="Ribosomal protein S20"/>
    <property type="match status" value="1"/>
</dbReference>
<sequence length="87" mass="9383">MANIKSAKKRIKVTETKTLNNRMIKSALKTVIKKFEAAVAGNNVEEAKTVFVAVTKSLDVAASKGVVHKNMAARKKSRLAAKLNAMA</sequence>
<name>RS20_CLOBB</name>
<gene>
    <name evidence="1" type="primary">rpsT</name>
    <name type="ordered locus">CLL_A0883</name>
</gene>